<proteinExistence type="inferred from homology"/>
<accession>B2TZI1</accession>
<organism>
    <name type="scientific">Shigella boydii serotype 18 (strain CDC 3083-94 / BS512)</name>
    <dbReference type="NCBI Taxonomy" id="344609"/>
    <lineage>
        <taxon>Bacteria</taxon>
        <taxon>Pseudomonadati</taxon>
        <taxon>Pseudomonadota</taxon>
        <taxon>Gammaproteobacteria</taxon>
        <taxon>Enterobacterales</taxon>
        <taxon>Enterobacteriaceae</taxon>
        <taxon>Shigella</taxon>
    </lineage>
</organism>
<comment type="function">
    <text evidence="1">Catalyzes the synthesis of activated sulfate.</text>
</comment>
<comment type="catalytic activity">
    <reaction evidence="1">
        <text>adenosine 5'-phosphosulfate + ATP = 3'-phosphoadenylyl sulfate + ADP + H(+)</text>
        <dbReference type="Rhea" id="RHEA:24152"/>
        <dbReference type="ChEBI" id="CHEBI:15378"/>
        <dbReference type="ChEBI" id="CHEBI:30616"/>
        <dbReference type="ChEBI" id="CHEBI:58243"/>
        <dbReference type="ChEBI" id="CHEBI:58339"/>
        <dbReference type="ChEBI" id="CHEBI:456216"/>
        <dbReference type="EC" id="2.7.1.25"/>
    </reaction>
</comment>
<comment type="pathway">
    <text evidence="1">Sulfur metabolism; hydrogen sulfide biosynthesis; sulfite from sulfate: step 2/3.</text>
</comment>
<comment type="similarity">
    <text evidence="1">Belongs to the APS kinase family.</text>
</comment>
<protein>
    <recommendedName>
        <fullName evidence="1">Adenylyl-sulfate kinase</fullName>
        <ecNumber evidence="1">2.7.1.25</ecNumber>
    </recommendedName>
    <alternativeName>
        <fullName evidence="1">APS kinase</fullName>
    </alternativeName>
    <alternativeName>
        <fullName evidence="1">ATP adenosine-5'-phosphosulfate 3'-phosphotransferase</fullName>
    </alternativeName>
    <alternativeName>
        <fullName evidence="1">Adenosine-5'-phosphosulfate kinase</fullName>
    </alternativeName>
</protein>
<name>CYSC_SHIB3</name>
<dbReference type="EC" id="2.7.1.25" evidence="1"/>
<dbReference type="EMBL" id="CP001063">
    <property type="protein sequence ID" value="ACD07750.1"/>
    <property type="molecule type" value="Genomic_DNA"/>
</dbReference>
<dbReference type="RefSeq" id="WP_001173668.1">
    <property type="nucleotide sequence ID" value="NC_010658.1"/>
</dbReference>
<dbReference type="SMR" id="B2TZI1"/>
<dbReference type="STRING" id="344609.SbBS512_E3124"/>
<dbReference type="KEGG" id="sbc:SbBS512_E3124"/>
<dbReference type="HOGENOM" id="CLU_046932_1_0_6"/>
<dbReference type="UniPathway" id="UPA00140">
    <property type="reaction ID" value="UER00205"/>
</dbReference>
<dbReference type="Proteomes" id="UP000001030">
    <property type="component" value="Chromosome"/>
</dbReference>
<dbReference type="GO" id="GO:0004020">
    <property type="term" value="F:adenylylsulfate kinase activity"/>
    <property type="evidence" value="ECO:0007669"/>
    <property type="project" value="UniProtKB-UniRule"/>
</dbReference>
<dbReference type="GO" id="GO:0005524">
    <property type="term" value="F:ATP binding"/>
    <property type="evidence" value="ECO:0007669"/>
    <property type="project" value="UniProtKB-UniRule"/>
</dbReference>
<dbReference type="GO" id="GO:0070814">
    <property type="term" value="P:hydrogen sulfide biosynthetic process"/>
    <property type="evidence" value="ECO:0007669"/>
    <property type="project" value="UniProtKB-UniRule"/>
</dbReference>
<dbReference type="GO" id="GO:0000103">
    <property type="term" value="P:sulfate assimilation"/>
    <property type="evidence" value="ECO:0007669"/>
    <property type="project" value="UniProtKB-UniRule"/>
</dbReference>
<dbReference type="CDD" id="cd02027">
    <property type="entry name" value="APSK"/>
    <property type="match status" value="1"/>
</dbReference>
<dbReference type="FunFam" id="3.40.50.300:FF:000212">
    <property type="entry name" value="Adenylyl-sulfate kinase"/>
    <property type="match status" value="1"/>
</dbReference>
<dbReference type="Gene3D" id="3.40.50.300">
    <property type="entry name" value="P-loop containing nucleotide triphosphate hydrolases"/>
    <property type="match status" value="1"/>
</dbReference>
<dbReference type="HAMAP" id="MF_00065">
    <property type="entry name" value="Adenylyl_sulf_kinase"/>
    <property type="match status" value="1"/>
</dbReference>
<dbReference type="InterPro" id="IPR002891">
    <property type="entry name" value="APS_kinase"/>
</dbReference>
<dbReference type="InterPro" id="IPR027417">
    <property type="entry name" value="P-loop_NTPase"/>
</dbReference>
<dbReference type="NCBIfam" id="TIGR00455">
    <property type="entry name" value="apsK"/>
    <property type="match status" value="1"/>
</dbReference>
<dbReference type="NCBIfam" id="NF003013">
    <property type="entry name" value="PRK03846.1"/>
    <property type="match status" value="1"/>
</dbReference>
<dbReference type="PANTHER" id="PTHR11055:SF63">
    <property type="entry name" value="ADENYLYL-SULFATE KINASE 1, CHLOROPLASTIC"/>
    <property type="match status" value="1"/>
</dbReference>
<dbReference type="PANTHER" id="PTHR11055">
    <property type="entry name" value="BIFUNCTIONAL 3'-PHOSPHOADENOSINE 5'-PHOSPHOSULFATE SYNTHASE"/>
    <property type="match status" value="1"/>
</dbReference>
<dbReference type="Pfam" id="PF01583">
    <property type="entry name" value="APS_kinase"/>
    <property type="match status" value="1"/>
</dbReference>
<dbReference type="SUPFAM" id="SSF52540">
    <property type="entry name" value="P-loop containing nucleoside triphosphate hydrolases"/>
    <property type="match status" value="1"/>
</dbReference>
<keyword id="KW-0067">ATP-binding</keyword>
<keyword id="KW-0418">Kinase</keyword>
<keyword id="KW-0547">Nucleotide-binding</keyword>
<keyword id="KW-0597">Phosphoprotein</keyword>
<keyword id="KW-1185">Reference proteome</keyword>
<keyword id="KW-0808">Transferase</keyword>
<reference key="1">
    <citation type="submission" date="2008-05" db="EMBL/GenBank/DDBJ databases">
        <title>Complete sequence of Shigella boydii serotype 18 strain BS512.</title>
        <authorList>
            <person name="Rasko D.A."/>
            <person name="Rosovitz M."/>
            <person name="Maurelli A.T."/>
            <person name="Myers G."/>
            <person name="Seshadri R."/>
            <person name="Cer R."/>
            <person name="Jiang L."/>
            <person name="Ravel J."/>
            <person name="Sebastian Y."/>
        </authorList>
    </citation>
    <scope>NUCLEOTIDE SEQUENCE [LARGE SCALE GENOMIC DNA]</scope>
    <source>
        <strain>CDC 3083-94 / BS512</strain>
    </source>
</reference>
<feature type="chain" id="PRO_1000092252" description="Adenylyl-sulfate kinase">
    <location>
        <begin position="1"/>
        <end position="201"/>
    </location>
</feature>
<feature type="active site" description="Phosphoserine intermediate" evidence="1">
    <location>
        <position position="109"/>
    </location>
</feature>
<feature type="binding site" evidence="1">
    <location>
        <begin position="35"/>
        <end position="42"/>
    </location>
    <ligand>
        <name>ATP</name>
        <dbReference type="ChEBI" id="CHEBI:30616"/>
    </ligand>
</feature>
<evidence type="ECO:0000255" key="1">
    <source>
        <dbReference type="HAMAP-Rule" id="MF_00065"/>
    </source>
</evidence>
<sequence>MALHDENVVWHSHPVTVQQRELHHCHRGVVLWFTGLSGSGKSTVAGALEEALHKLGVSTYLLDGDNVRHGLCSDLGFSDADRKENIRRVGEVANLMVEAGLVVLTAFISPHRAERQMVRERVGEGRFIEVFVDTPLAICEARDPKGLYKKARAGELRNFTGIDSVYEAPESAEIHLNGEQLVTNLVQQLLDLLRQNDIIRS</sequence>
<gene>
    <name evidence="1" type="primary">cysC</name>
    <name type="ordered locus">SbBS512_E3124</name>
</gene>